<sequence length="80" mass="9358">MKKDIHPEYRPVVFMDTTTGYQFLSGSTKRSNETVEFEGETYPLIRVEISSDSHPFYTGRQKFTQADGRVDRFNKKYGLK</sequence>
<proteinExistence type="inferred from homology"/>
<comment type="subunit">
    <text evidence="1">Part of the 50S ribosomal subunit.</text>
</comment>
<comment type="similarity">
    <text evidence="1">Belongs to the bacterial ribosomal protein bL31 family. Type B subfamily.</text>
</comment>
<feature type="chain" id="PRO_1000176998" description="Large ribosomal subunit protein bL31B">
    <location>
        <begin position="1"/>
        <end position="80"/>
    </location>
</feature>
<keyword id="KW-0687">Ribonucleoprotein</keyword>
<keyword id="KW-0689">Ribosomal protein</keyword>
<name>RL31B_STRZP</name>
<protein>
    <recommendedName>
        <fullName evidence="1">Large ribosomal subunit protein bL31B</fullName>
    </recommendedName>
    <alternativeName>
        <fullName evidence="2">50S ribosomal protein L31 type B</fullName>
    </alternativeName>
</protein>
<reference key="1">
    <citation type="journal article" date="2010" name="Genome Biol.">
        <title>Structure and dynamics of the pan-genome of Streptococcus pneumoniae and closely related species.</title>
        <authorList>
            <person name="Donati C."/>
            <person name="Hiller N.L."/>
            <person name="Tettelin H."/>
            <person name="Muzzi A."/>
            <person name="Croucher N.J."/>
            <person name="Angiuoli S.V."/>
            <person name="Oggioni M."/>
            <person name="Dunning Hotopp J.C."/>
            <person name="Hu F.Z."/>
            <person name="Riley D.R."/>
            <person name="Covacci A."/>
            <person name="Mitchell T.J."/>
            <person name="Bentley S.D."/>
            <person name="Kilian M."/>
            <person name="Ehrlich G.D."/>
            <person name="Rappuoli R."/>
            <person name="Moxon E.R."/>
            <person name="Masignani V."/>
        </authorList>
    </citation>
    <scope>NUCLEOTIDE SEQUENCE [LARGE SCALE GENOMIC DNA]</scope>
    <source>
        <strain>P1031</strain>
    </source>
</reference>
<dbReference type="EMBL" id="CP000920">
    <property type="protein sequence ID" value="ACO21931.1"/>
    <property type="molecule type" value="Genomic_DNA"/>
</dbReference>
<dbReference type="RefSeq" id="WP_000710764.1">
    <property type="nucleotide sequence ID" value="NC_012467.1"/>
</dbReference>
<dbReference type="SMR" id="C1CL34"/>
<dbReference type="KEGG" id="spp:SPP_1339"/>
<dbReference type="HOGENOM" id="CLU_114306_2_2_9"/>
<dbReference type="GO" id="GO:1990904">
    <property type="term" value="C:ribonucleoprotein complex"/>
    <property type="evidence" value="ECO:0007669"/>
    <property type="project" value="UniProtKB-KW"/>
</dbReference>
<dbReference type="GO" id="GO:0005840">
    <property type="term" value="C:ribosome"/>
    <property type="evidence" value="ECO:0007669"/>
    <property type="project" value="UniProtKB-KW"/>
</dbReference>
<dbReference type="GO" id="GO:0003735">
    <property type="term" value="F:structural constituent of ribosome"/>
    <property type="evidence" value="ECO:0007669"/>
    <property type="project" value="InterPro"/>
</dbReference>
<dbReference type="GO" id="GO:0006412">
    <property type="term" value="P:translation"/>
    <property type="evidence" value="ECO:0007669"/>
    <property type="project" value="UniProtKB-UniRule"/>
</dbReference>
<dbReference type="Gene3D" id="4.10.830.30">
    <property type="entry name" value="Ribosomal protein L31"/>
    <property type="match status" value="1"/>
</dbReference>
<dbReference type="HAMAP" id="MF_00502">
    <property type="entry name" value="Ribosomal_bL31_2"/>
    <property type="match status" value="1"/>
</dbReference>
<dbReference type="InterPro" id="IPR034704">
    <property type="entry name" value="Ribosomal_bL28/bL31-like_sf"/>
</dbReference>
<dbReference type="InterPro" id="IPR002150">
    <property type="entry name" value="Ribosomal_bL31"/>
</dbReference>
<dbReference type="InterPro" id="IPR027493">
    <property type="entry name" value="Ribosomal_bL31_B"/>
</dbReference>
<dbReference type="InterPro" id="IPR042105">
    <property type="entry name" value="Ribosomal_bL31_sf"/>
</dbReference>
<dbReference type="NCBIfam" id="TIGR00105">
    <property type="entry name" value="L31"/>
    <property type="match status" value="1"/>
</dbReference>
<dbReference type="NCBIfam" id="NF002462">
    <property type="entry name" value="PRK01678.1"/>
    <property type="match status" value="1"/>
</dbReference>
<dbReference type="PANTHER" id="PTHR33280">
    <property type="entry name" value="50S RIBOSOMAL PROTEIN L31, CHLOROPLASTIC"/>
    <property type="match status" value="1"/>
</dbReference>
<dbReference type="PANTHER" id="PTHR33280:SF1">
    <property type="entry name" value="LARGE RIBOSOMAL SUBUNIT PROTEIN BL31C"/>
    <property type="match status" value="1"/>
</dbReference>
<dbReference type="Pfam" id="PF01197">
    <property type="entry name" value="Ribosomal_L31"/>
    <property type="match status" value="1"/>
</dbReference>
<dbReference type="PRINTS" id="PR01249">
    <property type="entry name" value="RIBOSOMALL31"/>
</dbReference>
<dbReference type="SUPFAM" id="SSF143800">
    <property type="entry name" value="L28p-like"/>
    <property type="match status" value="1"/>
</dbReference>
<dbReference type="PROSITE" id="PS01143">
    <property type="entry name" value="RIBOSOMAL_L31"/>
    <property type="match status" value="1"/>
</dbReference>
<evidence type="ECO:0000255" key="1">
    <source>
        <dbReference type="HAMAP-Rule" id="MF_00502"/>
    </source>
</evidence>
<evidence type="ECO:0000305" key="2"/>
<organism>
    <name type="scientific">Streptococcus pneumoniae (strain P1031)</name>
    <dbReference type="NCBI Taxonomy" id="488223"/>
    <lineage>
        <taxon>Bacteria</taxon>
        <taxon>Bacillati</taxon>
        <taxon>Bacillota</taxon>
        <taxon>Bacilli</taxon>
        <taxon>Lactobacillales</taxon>
        <taxon>Streptococcaceae</taxon>
        <taxon>Streptococcus</taxon>
    </lineage>
</organism>
<gene>
    <name evidence="1" type="primary">rpmE2</name>
    <name type="ordered locus">SPP_1339</name>
</gene>
<accession>C1CL34</accession>